<dbReference type="EC" id="2.4.2.22" evidence="1"/>
<dbReference type="EMBL" id="BA000034">
    <property type="protein sequence ID" value="BAC64088.1"/>
    <property type="molecule type" value="Genomic_DNA"/>
</dbReference>
<dbReference type="RefSeq" id="WP_002984677.1">
    <property type="nucleotide sequence ID" value="NC_004606.1"/>
</dbReference>
<dbReference type="SMR" id="P0DH49"/>
<dbReference type="KEGG" id="sps:SPs0993"/>
<dbReference type="HOGENOM" id="CLU_099015_0_0_9"/>
<dbReference type="UniPathway" id="UPA00602">
    <property type="reaction ID" value="UER00658"/>
</dbReference>
<dbReference type="GO" id="GO:0005737">
    <property type="term" value="C:cytoplasm"/>
    <property type="evidence" value="ECO:0007669"/>
    <property type="project" value="UniProtKB-SubCell"/>
</dbReference>
<dbReference type="GO" id="GO:0000310">
    <property type="term" value="F:xanthine phosphoribosyltransferase activity"/>
    <property type="evidence" value="ECO:0007669"/>
    <property type="project" value="UniProtKB-UniRule"/>
</dbReference>
<dbReference type="GO" id="GO:0006166">
    <property type="term" value="P:purine ribonucleoside salvage"/>
    <property type="evidence" value="ECO:0007669"/>
    <property type="project" value="UniProtKB-KW"/>
</dbReference>
<dbReference type="GO" id="GO:0046110">
    <property type="term" value="P:xanthine metabolic process"/>
    <property type="evidence" value="ECO:0007669"/>
    <property type="project" value="InterPro"/>
</dbReference>
<dbReference type="GO" id="GO:0032265">
    <property type="term" value="P:XMP salvage"/>
    <property type="evidence" value="ECO:0007669"/>
    <property type="project" value="UniProtKB-UniRule"/>
</dbReference>
<dbReference type="CDD" id="cd06223">
    <property type="entry name" value="PRTases_typeI"/>
    <property type="match status" value="1"/>
</dbReference>
<dbReference type="Gene3D" id="3.40.50.2020">
    <property type="match status" value="1"/>
</dbReference>
<dbReference type="HAMAP" id="MF_01184">
    <property type="entry name" value="XPRTase"/>
    <property type="match status" value="1"/>
</dbReference>
<dbReference type="InterPro" id="IPR000836">
    <property type="entry name" value="PRibTrfase_dom"/>
</dbReference>
<dbReference type="InterPro" id="IPR029057">
    <property type="entry name" value="PRTase-like"/>
</dbReference>
<dbReference type="InterPro" id="IPR050118">
    <property type="entry name" value="Pur/Pyrimidine_PRTase"/>
</dbReference>
<dbReference type="InterPro" id="IPR010079">
    <property type="entry name" value="Xanthine_PRibTrfase"/>
</dbReference>
<dbReference type="NCBIfam" id="NF006671">
    <property type="entry name" value="PRK09219.1"/>
    <property type="match status" value="1"/>
</dbReference>
<dbReference type="NCBIfam" id="TIGR01744">
    <property type="entry name" value="XPRTase"/>
    <property type="match status" value="1"/>
</dbReference>
<dbReference type="PANTHER" id="PTHR43864">
    <property type="entry name" value="HYPOXANTHINE/GUANINE PHOSPHORIBOSYLTRANSFERASE"/>
    <property type="match status" value="1"/>
</dbReference>
<dbReference type="PANTHER" id="PTHR43864:SF1">
    <property type="entry name" value="XANTHINE PHOSPHORIBOSYLTRANSFERASE"/>
    <property type="match status" value="1"/>
</dbReference>
<dbReference type="Pfam" id="PF00156">
    <property type="entry name" value="Pribosyltran"/>
    <property type="match status" value="1"/>
</dbReference>
<dbReference type="SUPFAM" id="SSF53271">
    <property type="entry name" value="PRTase-like"/>
    <property type="match status" value="1"/>
</dbReference>
<keyword id="KW-0963">Cytoplasm</keyword>
<keyword id="KW-0328">Glycosyltransferase</keyword>
<keyword id="KW-0660">Purine salvage</keyword>
<keyword id="KW-0808">Transferase</keyword>
<gene>
    <name evidence="1" type="primary">xpt</name>
    <name type="ordered locus">SPs0993</name>
</gene>
<sequence length="193" mass="20994">MQLLEERILTDGNILGENILKVDNFLTHQVDYRLMKAIGKVFAQKYAEAGITKVVTIEASGIAPAVYAAEAMDVPMIFAKKHKNITMTEGILTAEVYSFTKQVTSTVSIAGKFLSKEDKVLIIDDFLANGQAAKGLIEIIGQAGAQVVGVGIVIEKSFQDGRRLIEDMGIEVTSLARIKNFENGNLNFLEADA</sequence>
<evidence type="ECO:0000255" key="1">
    <source>
        <dbReference type="HAMAP-Rule" id="MF_01184"/>
    </source>
</evidence>
<name>XPT_STRPQ</name>
<proteinExistence type="inferred from homology"/>
<organism>
    <name type="scientific">Streptococcus pyogenes serotype M3 (strain SSI-1)</name>
    <dbReference type="NCBI Taxonomy" id="193567"/>
    <lineage>
        <taxon>Bacteria</taxon>
        <taxon>Bacillati</taxon>
        <taxon>Bacillota</taxon>
        <taxon>Bacilli</taxon>
        <taxon>Lactobacillales</taxon>
        <taxon>Streptococcaceae</taxon>
        <taxon>Streptococcus</taxon>
    </lineage>
</organism>
<feature type="chain" id="PRO_0000411664" description="Xanthine phosphoribosyltransferase">
    <location>
        <begin position="1"/>
        <end position="193"/>
    </location>
</feature>
<feature type="binding site" evidence="1">
    <location>
        <position position="20"/>
    </location>
    <ligand>
        <name>xanthine</name>
        <dbReference type="ChEBI" id="CHEBI:17712"/>
    </ligand>
</feature>
<feature type="binding site" evidence="1">
    <location>
        <position position="27"/>
    </location>
    <ligand>
        <name>xanthine</name>
        <dbReference type="ChEBI" id="CHEBI:17712"/>
    </ligand>
</feature>
<feature type="binding site" evidence="1">
    <location>
        <begin position="128"/>
        <end position="132"/>
    </location>
    <ligand>
        <name>5-phospho-alpha-D-ribose 1-diphosphate</name>
        <dbReference type="ChEBI" id="CHEBI:58017"/>
    </ligand>
</feature>
<feature type="binding site" evidence="1">
    <location>
        <position position="156"/>
    </location>
    <ligand>
        <name>xanthine</name>
        <dbReference type="ChEBI" id="CHEBI:17712"/>
    </ligand>
</feature>
<reference key="1">
    <citation type="journal article" date="2003" name="Genome Res.">
        <title>Genome sequence of an M3 strain of Streptococcus pyogenes reveals a large-scale genomic rearrangement in invasive strains and new insights into phage evolution.</title>
        <authorList>
            <person name="Nakagawa I."/>
            <person name="Kurokawa K."/>
            <person name="Yamashita A."/>
            <person name="Nakata M."/>
            <person name="Tomiyasu Y."/>
            <person name="Okahashi N."/>
            <person name="Kawabata S."/>
            <person name="Yamazaki K."/>
            <person name="Shiba T."/>
            <person name="Yasunaga T."/>
            <person name="Hayashi H."/>
            <person name="Hattori M."/>
            <person name="Hamada S."/>
        </authorList>
    </citation>
    <scope>NUCLEOTIDE SEQUENCE [LARGE SCALE GENOMIC DNA]</scope>
    <source>
        <strain>SSI-1</strain>
    </source>
</reference>
<accession>P0DH49</accession>
<accession>Q79X80</accession>
<accession>Q7CF46</accession>
<comment type="function">
    <text evidence="1">Converts the preformed base xanthine, a product of nucleic acid breakdown, to xanthosine 5'-monophosphate (XMP), so it can be reused for RNA or DNA synthesis.</text>
</comment>
<comment type="catalytic activity">
    <reaction evidence="1">
        <text>XMP + diphosphate = xanthine + 5-phospho-alpha-D-ribose 1-diphosphate</text>
        <dbReference type="Rhea" id="RHEA:10800"/>
        <dbReference type="ChEBI" id="CHEBI:17712"/>
        <dbReference type="ChEBI" id="CHEBI:33019"/>
        <dbReference type="ChEBI" id="CHEBI:57464"/>
        <dbReference type="ChEBI" id="CHEBI:58017"/>
        <dbReference type="EC" id="2.4.2.22"/>
    </reaction>
</comment>
<comment type="pathway">
    <text evidence="1">Purine metabolism; XMP biosynthesis via salvage pathway; XMP from xanthine: step 1/1.</text>
</comment>
<comment type="subunit">
    <text evidence="1">Homodimer.</text>
</comment>
<comment type="subcellular location">
    <subcellularLocation>
        <location evidence="1">Cytoplasm</location>
    </subcellularLocation>
</comment>
<comment type="similarity">
    <text evidence="1">Belongs to the purine/pyrimidine phosphoribosyltransferase family. Xpt subfamily.</text>
</comment>
<protein>
    <recommendedName>
        <fullName evidence="1">Xanthine phosphoribosyltransferase</fullName>
        <shortName evidence="1">XPRTase</shortName>
        <ecNumber evidence="1">2.4.2.22</ecNumber>
    </recommendedName>
</protein>